<keyword id="KW-0249">Electron transport</keyword>
<keyword id="KW-0349">Heme</keyword>
<keyword id="KW-0408">Iron</keyword>
<keyword id="KW-0472">Membrane</keyword>
<keyword id="KW-0479">Metal-binding</keyword>
<keyword id="KW-0496">Mitochondrion</keyword>
<keyword id="KW-0999">Mitochondrion inner membrane</keyword>
<keyword id="KW-0679">Respiratory chain</keyword>
<keyword id="KW-0812">Transmembrane</keyword>
<keyword id="KW-1133">Transmembrane helix</keyword>
<keyword id="KW-0813">Transport</keyword>
<keyword id="KW-0830">Ubiquinone</keyword>
<proteinExistence type="inferred from homology"/>
<organism>
    <name type="scientific">Cephalophus spadix</name>
    <name type="common">Abbott's duiker</name>
    <dbReference type="NCBI Taxonomy" id="129231"/>
    <lineage>
        <taxon>Eukaryota</taxon>
        <taxon>Metazoa</taxon>
        <taxon>Chordata</taxon>
        <taxon>Craniata</taxon>
        <taxon>Vertebrata</taxon>
        <taxon>Euteleostomi</taxon>
        <taxon>Mammalia</taxon>
        <taxon>Eutheria</taxon>
        <taxon>Laurasiatheria</taxon>
        <taxon>Artiodactyla</taxon>
        <taxon>Ruminantia</taxon>
        <taxon>Pecora</taxon>
        <taxon>Bovidae</taxon>
        <taxon>Cephalophinae</taxon>
        <taxon>Cephalophus</taxon>
    </lineage>
</organism>
<accession>Q9B5Q7</accession>
<feature type="chain" id="PRO_0000254674" description="Cytochrome b">
    <location>
        <begin position="1"/>
        <end position="379"/>
    </location>
</feature>
<feature type="transmembrane region" description="Helical" evidence="2">
    <location>
        <begin position="33"/>
        <end position="53"/>
    </location>
</feature>
<feature type="transmembrane region" description="Helical" evidence="2">
    <location>
        <begin position="77"/>
        <end position="98"/>
    </location>
</feature>
<feature type="transmembrane region" description="Helical" evidence="2">
    <location>
        <begin position="113"/>
        <end position="133"/>
    </location>
</feature>
<feature type="transmembrane region" description="Helical" evidence="2">
    <location>
        <begin position="178"/>
        <end position="198"/>
    </location>
</feature>
<feature type="transmembrane region" description="Helical" evidence="2">
    <location>
        <begin position="226"/>
        <end position="246"/>
    </location>
</feature>
<feature type="transmembrane region" description="Helical" evidence="2">
    <location>
        <begin position="288"/>
        <end position="308"/>
    </location>
</feature>
<feature type="transmembrane region" description="Helical" evidence="2">
    <location>
        <begin position="320"/>
        <end position="340"/>
    </location>
</feature>
<feature type="transmembrane region" description="Helical" evidence="2">
    <location>
        <begin position="347"/>
        <end position="367"/>
    </location>
</feature>
<feature type="binding site" description="axial binding residue" evidence="2">
    <location>
        <position position="83"/>
    </location>
    <ligand>
        <name>heme b</name>
        <dbReference type="ChEBI" id="CHEBI:60344"/>
        <label>b562</label>
    </ligand>
    <ligandPart>
        <name>Fe</name>
        <dbReference type="ChEBI" id="CHEBI:18248"/>
    </ligandPart>
</feature>
<feature type="binding site" description="axial binding residue" evidence="2">
    <location>
        <position position="97"/>
    </location>
    <ligand>
        <name>heme b</name>
        <dbReference type="ChEBI" id="CHEBI:60344"/>
        <label>b566</label>
    </ligand>
    <ligandPart>
        <name>Fe</name>
        <dbReference type="ChEBI" id="CHEBI:18248"/>
    </ligandPart>
</feature>
<feature type="binding site" description="axial binding residue" evidence="2">
    <location>
        <position position="182"/>
    </location>
    <ligand>
        <name>heme b</name>
        <dbReference type="ChEBI" id="CHEBI:60344"/>
        <label>b562</label>
    </ligand>
    <ligandPart>
        <name>Fe</name>
        <dbReference type="ChEBI" id="CHEBI:18248"/>
    </ligandPart>
</feature>
<feature type="binding site" description="axial binding residue" evidence="2">
    <location>
        <position position="196"/>
    </location>
    <ligand>
        <name>heme b</name>
        <dbReference type="ChEBI" id="CHEBI:60344"/>
        <label>b566</label>
    </ligand>
    <ligandPart>
        <name>Fe</name>
        <dbReference type="ChEBI" id="CHEBI:18248"/>
    </ligandPart>
</feature>
<feature type="binding site" evidence="2">
    <location>
        <position position="201"/>
    </location>
    <ligand>
        <name>a ubiquinone</name>
        <dbReference type="ChEBI" id="CHEBI:16389"/>
    </ligand>
</feature>
<name>CYB_CEPSP</name>
<geneLocation type="mitochondrion"/>
<gene>
    <name type="primary">MT-CYB</name>
    <name type="synonym">COB</name>
    <name type="synonym">CYTB</name>
    <name type="synonym">MTCYB</name>
</gene>
<dbReference type="EMBL" id="AF153899">
    <property type="protein sequence ID" value="AAK26687.1"/>
    <property type="molecule type" value="Genomic_DNA"/>
</dbReference>
<dbReference type="SMR" id="Q9B5Q7"/>
<dbReference type="GO" id="GO:0005743">
    <property type="term" value="C:mitochondrial inner membrane"/>
    <property type="evidence" value="ECO:0007669"/>
    <property type="project" value="UniProtKB-SubCell"/>
</dbReference>
<dbReference type="GO" id="GO:0045275">
    <property type="term" value="C:respiratory chain complex III"/>
    <property type="evidence" value="ECO:0007669"/>
    <property type="project" value="InterPro"/>
</dbReference>
<dbReference type="GO" id="GO:0046872">
    <property type="term" value="F:metal ion binding"/>
    <property type="evidence" value="ECO:0007669"/>
    <property type="project" value="UniProtKB-KW"/>
</dbReference>
<dbReference type="GO" id="GO:0008121">
    <property type="term" value="F:ubiquinol-cytochrome-c reductase activity"/>
    <property type="evidence" value="ECO:0007669"/>
    <property type="project" value="InterPro"/>
</dbReference>
<dbReference type="GO" id="GO:0006122">
    <property type="term" value="P:mitochondrial electron transport, ubiquinol to cytochrome c"/>
    <property type="evidence" value="ECO:0007669"/>
    <property type="project" value="TreeGrafter"/>
</dbReference>
<dbReference type="CDD" id="cd00290">
    <property type="entry name" value="cytochrome_b_C"/>
    <property type="match status" value="1"/>
</dbReference>
<dbReference type="CDD" id="cd00284">
    <property type="entry name" value="Cytochrome_b_N"/>
    <property type="match status" value="1"/>
</dbReference>
<dbReference type="FunFam" id="1.20.810.10:FF:000002">
    <property type="entry name" value="Cytochrome b"/>
    <property type="match status" value="1"/>
</dbReference>
<dbReference type="Gene3D" id="1.20.810.10">
    <property type="entry name" value="Cytochrome Bc1 Complex, Chain C"/>
    <property type="match status" value="1"/>
</dbReference>
<dbReference type="InterPro" id="IPR005798">
    <property type="entry name" value="Cyt_b/b6_C"/>
</dbReference>
<dbReference type="InterPro" id="IPR036150">
    <property type="entry name" value="Cyt_b/b6_C_sf"/>
</dbReference>
<dbReference type="InterPro" id="IPR005797">
    <property type="entry name" value="Cyt_b/b6_N"/>
</dbReference>
<dbReference type="InterPro" id="IPR027387">
    <property type="entry name" value="Cytb/b6-like_sf"/>
</dbReference>
<dbReference type="InterPro" id="IPR030689">
    <property type="entry name" value="Cytochrome_b"/>
</dbReference>
<dbReference type="InterPro" id="IPR048260">
    <property type="entry name" value="Cytochrome_b_C_euk/bac"/>
</dbReference>
<dbReference type="InterPro" id="IPR048259">
    <property type="entry name" value="Cytochrome_b_N_euk/bac"/>
</dbReference>
<dbReference type="InterPro" id="IPR016174">
    <property type="entry name" value="Di-haem_cyt_TM"/>
</dbReference>
<dbReference type="PANTHER" id="PTHR19271">
    <property type="entry name" value="CYTOCHROME B"/>
    <property type="match status" value="1"/>
</dbReference>
<dbReference type="PANTHER" id="PTHR19271:SF16">
    <property type="entry name" value="CYTOCHROME B"/>
    <property type="match status" value="1"/>
</dbReference>
<dbReference type="Pfam" id="PF00032">
    <property type="entry name" value="Cytochrom_B_C"/>
    <property type="match status" value="1"/>
</dbReference>
<dbReference type="Pfam" id="PF00033">
    <property type="entry name" value="Cytochrome_B"/>
    <property type="match status" value="1"/>
</dbReference>
<dbReference type="PIRSF" id="PIRSF038885">
    <property type="entry name" value="COB"/>
    <property type="match status" value="1"/>
</dbReference>
<dbReference type="SUPFAM" id="SSF81648">
    <property type="entry name" value="a domain/subunit of cytochrome bc1 complex (Ubiquinol-cytochrome c reductase)"/>
    <property type="match status" value="1"/>
</dbReference>
<dbReference type="SUPFAM" id="SSF81342">
    <property type="entry name" value="Transmembrane di-heme cytochromes"/>
    <property type="match status" value="1"/>
</dbReference>
<dbReference type="PROSITE" id="PS51003">
    <property type="entry name" value="CYTB_CTER"/>
    <property type="match status" value="1"/>
</dbReference>
<dbReference type="PROSITE" id="PS51002">
    <property type="entry name" value="CYTB_NTER"/>
    <property type="match status" value="1"/>
</dbReference>
<protein>
    <recommendedName>
        <fullName>Cytochrome b</fullName>
    </recommendedName>
    <alternativeName>
        <fullName>Complex III subunit 3</fullName>
    </alternativeName>
    <alternativeName>
        <fullName>Complex III subunit III</fullName>
    </alternativeName>
    <alternativeName>
        <fullName>Cytochrome b-c1 complex subunit 3</fullName>
    </alternativeName>
    <alternativeName>
        <fullName>Ubiquinol-cytochrome-c reductase complex cytochrome b subunit</fullName>
    </alternativeName>
</protein>
<reference key="1">
    <citation type="journal article" date="2001" name="Mol. Phylogenet. Evol.">
        <title>Retrieval of four adaptive lineages in duiker antelope: evidence from mitochondrial DNA sequences and fluorescence in situ hybridization.</title>
        <authorList>
            <person name="van Vuuren B.J."/>
            <person name="Robinson T.J."/>
        </authorList>
    </citation>
    <scope>NUCLEOTIDE SEQUENCE [GENOMIC DNA]</scope>
</reference>
<comment type="function">
    <text evidence="2">Component of the ubiquinol-cytochrome c reductase complex (complex III or cytochrome b-c1 complex) that is part of the mitochondrial respiratory chain. The b-c1 complex mediates electron transfer from ubiquinol to cytochrome c. Contributes to the generation of a proton gradient across the mitochondrial membrane that is then used for ATP synthesis.</text>
</comment>
<comment type="cofactor">
    <cofactor evidence="2">
        <name>heme b</name>
        <dbReference type="ChEBI" id="CHEBI:60344"/>
    </cofactor>
    <text evidence="2">Binds 2 heme b groups non-covalently.</text>
</comment>
<comment type="subunit">
    <text evidence="2">The cytochrome bc1 complex contains 11 subunits: 3 respiratory subunits (MT-CYB, CYC1 and UQCRFS1), 2 core proteins (UQCRC1 and UQCRC2) and 6 low-molecular weight proteins (UQCRH/QCR6, UQCRB/QCR7, UQCRQ/QCR8, UQCR10/QCR9, UQCR11/QCR10 and a cleavage product of UQCRFS1). This cytochrome bc1 complex then forms a dimer.</text>
</comment>
<comment type="subcellular location">
    <subcellularLocation>
        <location evidence="2">Mitochondrion inner membrane</location>
        <topology evidence="2">Multi-pass membrane protein</topology>
    </subcellularLocation>
</comment>
<comment type="miscellaneous">
    <text evidence="1">Heme 1 (or BL or b562) is low-potential and absorbs at about 562 nm, and heme 2 (or BH or b566) is high-potential and absorbs at about 566 nm.</text>
</comment>
<comment type="similarity">
    <text evidence="3 4">Belongs to the cytochrome b family.</text>
</comment>
<comment type="caution">
    <text evidence="2">The full-length protein contains only eight transmembrane helices, not nine as predicted by bioinformatics tools.</text>
</comment>
<sequence>MTNIQKTHPLMKIVNNAFIDLPTPSNISSWWNFGSLLGICLILQILTGLFLAMHYTADTTTAFSSVTHICRDVNYGWIIRYMHANGASMFFICLFMHVGRGLYYGSYAYTETWNIGVILLFATMATAFMGYVLPWGQMSFWGATVITNLLSAIPYIGTNLVEWIWGGFSVDKATLTRFFAFHFIFPFIIAALAMVHLLFLHETGSNNPTGISSDADKIPFHPYYTIKDILGALLLILALMILVLFSPDLLGDPDNYTPANPLNTPPHIKPEWYFLFAYAILRSIPNKLGGVLALVLSILILVLMPLLHTSKQRSMMFRPISQCLFWILVADLLTLTWIGGQPVEHPYIIIGQLASIMYFLLILVLMPMASTIENNLLKW</sequence>
<evidence type="ECO:0000250" key="1"/>
<evidence type="ECO:0000250" key="2">
    <source>
        <dbReference type="UniProtKB" id="P00157"/>
    </source>
</evidence>
<evidence type="ECO:0000255" key="3">
    <source>
        <dbReference type="PROSITE-ProRule" id="PRU00967"/>
    </source>
</evidence>
<evidence type="ECO:0000255" key="4">
    <source>
        <dbReference type="PROSITE-ProRule" id="PRU00968"/>
    </source>
</evidence>